<gene>
    <name evidence="1" type="primary">pth</name>
    <name type="ordered locus">CJE0357</name>
</gene>
<evidence type="ECO:0000255" key="1">
    <source>
        <dbReference type="HAMAP-Rule" id="MF_00083"/>
    </source>
</evidence>
<proteinExistence type="inferred from homology"/>
<comment type="function">
    <text evidence="1">Hydrolyzes ribosome-free peptidyl-tRNAs (with 1 or more amino acids incorporated), which drop off the ribosome during protein synthesis, or as a result of ribosome stalling.</text>
</comment>
<comment type="function">
    <text evidence="1">Catalyzes the release of premature peptidyl moieties from peptidyl-tRNA molecules trapped in stalled 50S ribosomal subunits, and thus maintains levels of free tRNAs and 50S ribosomes.</text>
</comment>
<comment type="catalytic activity">
    <reaction evidence="1">
        <text>an N-acyl-L-alpha-aminoacyl-tRNA + H2O = an N-acyl-L-amino acid + a tRNA + H(+)</text>
        <dbReference type="Rhea" id="RHEA:54448"/>
        <dbReference type="Rhea" id="RHEA-COMP:10123"/>
        <dbReference type="Rhea" id="RHEA-COMP:13883"/>
        <dbReference type="ChEBI" id="CHEBI:15377"/>
        <dbReference type="ChEBI" id="CHEBI:15378"/>
        <dbReference type="ChEBI" id="CHEBI:59874"/>
        <dbReference type="ChEBI" id="CHEBI:78442"/>
        <dbReference type="ChEBI" id="CHEBI:138191"/>
        <dbReference type="EC" id="3.1.1.29"/>
    </reaction>
</comment>
<comment type="subunit">
    <text evidence="1">Monomer.</text>
</comment>
<comment type="subcellular location">
    <subcellularLocation>
        <location evidence="1">Cytoplasm</location>
    </subcellularLocation>
</comment>
<comment type="similarity">
    <text evidence="1">Belongs to the PTH family.</text>
</comment>
<sequence>MILVVGLGNIGVEYENTRHNVGFMLIDLLLKESNFTNLTNSKFKGELFKIGSSLLLLKPSTYMNNSGLSVKAVNDFYKCERMIVIHDDIDINLGALRFKKGGSSGGHNGLKSIDTLCGNDYERVRIGVGKGENVISHVLGKFKPEEEITLSKVLEHTKKALLELIENDDLSAISSKYSLKA</sequence>
<protein>
    <recommendedName>
        <fullName evidence="1">Peptidyl-tRNA hydrolase</fullName>
        <shortName evidence="1">Pth</shortName>
        <ecNumber evidence="1">3.1.1.29</ecNumber>
    </recommendedName>
</protein>
<reference key="1">
    <citation type="journal article" date="2005" name="PLoS Biol.">
        <title>Major structural differences and novel potential virulence mechanisms from the genomes of multiple Campylobacter species.</title>
        <authorList>
            <person name="Fouts D.E."/>
            <person name="Mongodin E.F."/>
            <person name="Mandrell R.E."/>
            <person name="Miller W.G."/>
            <person name="Rasko D.A."/>
            <person name="Ravel J."/>
            <person name="Brinkac L.M."/>
            <person name="DeBoy R.T."/>
            <person name="Parker C.T."/>
            <person name="Daugherty S.C."/>
            <person name="Dodson R.J."/>
            <person name="Durkin A.S."/>
            <person name="Madupu R."/>
            <person name="Sullivan S.A."/>
            <person name="Shetty J.U."/>
            <person name="Ayodeji M.A."/>
            <person name="Shvartsbeyn A."/>
            <person name="Schatz M.C."/>
            <person name="Badger J.H."/>
            <person name="Fraser C.M."/>
            <person name="Nelson K.E."/>
        </authorList>
    </citation>
    <scope>NUCLEOTIDE SEQUENCE [LARGE SCALE GENOMIC DNA]</scope>
    <source>
        <strain>RM1221</strain>
    </source>
</reference>
<feature type="chain" id="PRO_0000187713" description="Peptidyl-tRNA hydrolase">
    <location>
        <begin position="1"/>
        <end position="181"/>
    </location>
</feature>
<feature type="active site" description="Proton acceptor" evidence="1">
    <location>
        <position position="19"/>
    </location>
</feature>
<feature type="binding site" evidence="1">
    <location>
        <position position="14"/>
    </location>
    <ligand>
        <name>tRNA</name>
        <dbReference type="ChEBI" id="CHEBI:17843"/>
    </ligand>
</feature>
<feature type="binding site" evidence="1">
    <location>
        <position position="62"/>
    </location>
    <ligand>
        <name>tRNA</name>
        <dbReference type="ChEBI" id="CHEBI:17843"/>
    </ligand>
</feature>
<feature type="binding site" evidence="1">
    <location>
        <position position="64"/>
    </location>
    <ligand>
        <name>tRNA</name>
        <dbReference type="ChEBI" id="CHEBI:17843"/>
    </ligand>
</feature>
<feature type="binding site" evidence="1">
    <location>
        <position position="108"/>
    </location>
    <ligand>
        <name>tRNA</name>
        <dbReference type="ChEBI" id="CHEBI:17843"/>
    </ligand>
</feature>
<feature type="site" description="Discriminates between blocked and unblocked aminoacyl-tRNA" evidence="1">
    <location>
        <position position="9"/>
    </location>
</feature>
<feature type="site" description="Stabilizes the basic form of H active site to accept a proton" evidence="1">
    <location>
        <position position="87"/>
    </location>
</feature>
<keyword id="KW-0963">Cytoplasm</keyword>
<keyword id="KW-0378">Hydrolase</keyword>
<keyword id="KW-0694">RNA-binding</keyword>
<keyword id="KW-0820">tRNA-binding</keyword>
<organism>
    <name type="scientific">Campylobacter jejuni (strain RM1221)</name>
    <dbReference type="NCBI Taxonomy" id="195099"/>
    <lineage>
        <taxon>Bacteria</taxon>
        <taxon>Pseudomonadati</taxon>
        <taxon>Campylobacterota</taxon>
        <taxon>Epsilonproteobacteria</taxon>
        <taxon>Campylobacterales</taxon>
        <taxon>Campylobacteraceae</taxon>
        <taxon>Campylobacter</taxon>
    </lineage>
</organism>
<accession>Q5HWF9</accession>
<name>PTH_CAMJR</name>
<dbReference type="EC" id="3.1.1.29" evidence="1"/>
<dbReference type="EMBL" id="CP000025">
    <property type="protein sequence ID" value="AAW34946.1"/>
    <property type="molecule type" value="Genomic_DNA"/>
</dbReference>
<dbReference type="RefSeq" id="WP_002854409.1">
    <property type="nucleotide sequence ID" value="NC_003912.7"/>
</dbReference>
<dbReference type="SMR" id="Q5HWF9"/>
<dbReference type="KEGG" id="cjr:CJE0357"/>
<dbReference type="HOGENOM" id="CLU_062456_4_1_7"/>
<dbReference type="GO" id="GO:0005737">
    <property type="term" value="C:cytoplasm"/>
    <property type="evidence" value="ECO:0007669"/>
    <property type="project" value="UniProtKB-SubCell"/>
</dbReference>
<dbReference type="GO" id="GO:0004045">
    <property type="term" value="F:peptidyl-tRNA hydrolase activity"/>
    <property type="evidence" value="ECO:0007669"/>
    <property type="project" value="UniProtKB-UniRule"/>
</dbReference>
<dbReference type="GO" id="GO:0000049">
    <property type="term" value="F:tRNA binding"/>
    <property type="evidence" value="ECO:0007669"/>
    <property type="project" value="UniProtKB-UniRule"/>
</dbReference>
<dbReference type="GO" id="GO:0006515">
    <property type="term" value="P:protein quality control for misfolded or incompletely synthesized proteins"/>
    <property type="evidence" value="ECO:0007669"/>
    <property type="project" value="UniProtKB-UniRule"/>
</dbReference>
<dbReference type="GO" id="GO:0072344">
    <property type="term" value="P:rescue of stalled ribosome"/>
    <property type="evidence" value="ECO:0007669"/>
    <property type="project" value="UniProtKB-UniRule"/>
</dbReference>
<dbReference type="CDD" id="cd00462">
    <property type="entry name" value="PTH"/>
    <property type="match status" value="1"/>
</dbReference>
<dbReference type="FunFam" id="3.40.50.1470:FF:000001">
    <property type="entry name" value="Peptidyl-tRNA hydrolase"/>
    <property type="match status" value="1"/>
</dbReference>
<dbReference type="Gene3D" id="3.40.50.1470">
    <property type="entry name" value="Peptidyl-tRNA hydrolase"/>
    <property type="match status" value="1"/>
</dbReference>
<dbReference type="HAMAP" id="MF_00083">
    <property type="entry name" value="Pept_tRNA_hydro_bact"/>
    <property type="match status" value="1"/>
</dbReference>
<dbReference type="InterPro" id="IPR001328">
    <property type="entry name" value="Pept_tRNA_hydro"/>
</dbReference>
<dbReference type="InterPro" id="IPR018171">
    <property type="entry name" value="Pept_tRNA_hydro_CS"/>
</dbReference>
<dbReference type="InterPro" id="IPR036416">
    <property type="entry name" value="Pept_tRNA_hydro_sf"/>
</dbReference>
<dbReference type="NCBIfam" id="TIGR00447">
    <property type="entry name" value="pth"/>
    <property type="match status" value="1"/>
</dbReference>
<dbReference type="PANTHER" id="PTHR17224">
    <property type="entry name" value="PEPTIDYL-TRNA HYDROLASE"/>
    <property type="match status" value="1"/>
</dbReference>
<dbReference type="PANTHER" id="PTHR17224:SF1">
    <property type="entry name" value="PEPTIDYL-TRNA HYDROLASE"/>
    <property type="match status" value="1"/>
</dbReference>
<dbReference type="Pfam" id="PF01195">
    <property type="entry name" value="Pept_tRNA_hydro"/>
    <property type="match status" value="1"/>
</dbReference>
<dbReference type="SUPFAM" id="SSF53178">
    <property type="entry name" value="Peptidyl-tRNA hydrolase-like"/>
    <property type="match status" value="1"/>
</dbReference>
<dbReference type="PROSITE" id="PS01195">
    <property type="entry name" value="PEPT_TRNA_HYDROL_1"/>
    <property type="match status" value="1"/>
</dbReference>
<dbReference type="PROSITE" id="PS01196">
    <property type="entry name" value="PEPT_TRNA_HYDROL_2"/>
    <property type="match status" value="1"/>
</dbReference>